<feature type="peptide" id="PRO_0000044691" description="Mytilin-B">
    <location>
        <begin position="1"/>
        <end position="34"/>
    </location>
</feature>
<feature type="disulfide bond" evidence="1">
    <location>
        <begin position="2"/>
        <end position="27"/>
    </location>
</feature>
<feature type="disulfide bond" evidence="1">
    <location>
        <begin position="6"/>
        <end position="29"/>
    </location>
</feature>
<feature type="disulfide bond" evidence="1">
    <location>
        <begin position="10"/>
        <end position="31"/>
    </location>
</feature>
<feature type="disulfide bond" evidence="1">
    <location>
        <begin position="15"/>
        <end position="34"/>
    </location>
</feature>
<feature type="helix" evidence="3">
    <location>
        <begin position="2"/>
        <end position="12"/>
    </location>
</feature>
<feature type="strand" evidence="3">
    <location>
        <begin position="16"/>
        <end position="23"/>
    </location>
</feature>
<feature type="strand" evidence="3">
    <location>
        <begin position="26"/>
        <end position="32"/>
    </location>
</feature>
<organism>
    <name type="scientific">Mytilus edulis</name>
    <name type="common">Blue mussel</name>
    <dbReference type="NCBI Taxonomy" id="6550"/>
    <lineage>
        <taxon>Eukaryota</taxon>
        <taxon>Metazoa</taxon>
        <taxon>Spiralia</taxon>
        <taxon>Lophotrochozoa</taxon>
        <taxon>Mollusca</taxon>
        <taxon>Bivalvia</taxon>
        <taxon>Autobranchia</taxon>
        <taxon>Pteriomorphia</taxon>
        <taxon>Mytilida</taxon>
        <taxon>Mytiloidea</taxon>
        <taxon>Mytilidae</taxon>
        <taxon>Mytilinae</taxon>
        <taxon>Mytilus</taxon>
    </lineage>
</organism>
<proteinExistence type="evidence at protein level"/>
<keyword id="KW-0002">3D-structure</keyword>
<keyword id="KW-0044">Antibiotic</keyword>
<keyword id="KW-0929">Antimicrobial</keyword>
<keyword id="KW-0051">Antiviral defense</keyword>
<keyword id="KW-0930">Antiviral protein</keyword>
<keyword id="KW-0903">Direct protein sequencing</keyword>
<keyword id="KW-1015">Disulfide bond</keyword>
<keyword id="KW-0391">Immunity</keyword>
<keyword id="KW-0399">Innate immunity</keyword>
<keyword id="KW-0964">Secreted</keyword>
<evidence type="ECO:0000269" key="1">
    <source>
    </source>
</evidence>
<evidence type="ECO:0000269" key="2">
    <source>
    </source>
</evidence>
<evidence type="ECO:0007829" key="3">
    <source>
        <dbReference type="PDB" id="2EEM"/>
    </source>
</evidence>
<name>MYTB_MYTED</name>
<accession>P81613</accession>
<sequence length="34" mass="3982">SCASRCKGHCRARRCGYYVSVLYRGRCYCKCLRC</sequence>
<reference key="1">
    <citation type="journal article" date="1996" name="J. Biol. Chem.">
        <title>Innate immunity. Isolation of several cysteine-rich antimicrobial peptides from the blood of a mollusc, Mytilus edulis.</title>
        <authorList>
            <person name="Charlet M."/>
            <person name="Chernysh S."/>
            <person name="Philippe H."/>
            <person name="Hetru C."/>
            <person name="Hoffman J.A."/>
            <person name="Bulet P."/>
        </authorList>
    </citation>
    <scope>PROTEIN SEQUENCE</scope>
    <scope>CHARACTERIZATION</scope>
    <scope>MASS SPECTROMETRY</scope>
    <source>
        <tissue>Blood</tissue>
    </source>
</reference>
<reference key="2">
    <citation type="journal article" date="2008" name="Dev. Comp. Immunol.">
        <title>NMR structure of mussel mytilin, and antiviral-antibacterial activities of derived synthetic peptides.</title>
        <authorList>
            <person name="Roch P."/>
            <person name="Yang Y."/>
            <person name="Toubiana M."/>
            <person name="Aumelas A."/>
        </authorList>
    </citation>
    <scope>STRUCTURE BY NMR</scope>
    <scope>DISULFIDE BONDS</scope>
    <scope>ANTIVIRAL ACTIVITY</scope>
</reference>
<protein>
    <recommendedName>
        <fullName>Mytilin-B</fullName>
    </recommendedName>
</protein>
<comment type="function">
    <text>Has antibacterial and antiviral activity.</text>
</comment>
<comment type="subcellular location">
    <subcellularLocation>
        <location>Secreted</location>
    </subcellularLocation>
</comment>
<comment type="mass spectrometry" mass="3974.3" method="MALDI" evidence="2"/>
<dbReference type="PDB" id="2EEM">
    <property type="method" value="NMR"/>
    <property type="chains" value="A=1-34"/>
</dbReference>
<dbReference type="PDBsum" id="2EEM"/>
<dbReference type="BMRB" id="P81613"/>
<dbReference type="SMR" id="P81613"/>
<dbReference type="EvolutionaryTrace" id="P81613"/>
<dbReference type="GO" id="GO:0005576">
    <property type="term" value="C:extracellular region"/>
    <property type="evidence" value="ECO:0007669"/>
    <property type="project" value="UniProtKB-SubCell"/>
</dbReference>
<dbReference type="GO" id="GO:0042742">
    <property type="term" value="P:defense response to bacterium"/>
    <property type="evidence" value="ECO:0007669"/>
    <property type="project" value="UniProtKB-KW"/>
</dbReference>
<dbReference type="GO" id="GO:0051607">
    <property type="term" value="P:defense response to virus"/>
    <property type="evidence" value="ECO:0007669"/>
    <property type="project" value="UniProtKB-KW"/>
</dbReference>
<dbReference type="GO" id="GO:0045087">
    <property type="term" value="P:innate immune response"/>
    <property type="evidence" value="ECO:0007669"/>
    <property type="project" value="UniProtKB-KW"/>
</dbReference>
<dbReference type="GO" id="GO:0050688">
    <property type="term" value="P:regulation of defense response to virus"/>
    <property type="evidence" value="ECO:0007669"/>
    <property type="project" value="UniProtKB-KW"/>
</dbReference>
<dbReference type="InterPro" id="IPR019631">
    <property type="entry name" value="Myticin_preproprotein"/>
</dbReference>
<dbReference type="Pfam" id="PF10690">
    <property type="entry name" value="Myticin-prepro"/>
    <property type="match status" value="1"/>
</dbReference>